<comment type="function">
    <text evidence="1">Displays ATPase and GTPase activities.</text>
</comment>
<comment type="similarity">
    <text evidence="1">Belongs to the RapZ-like family.</text>
</comment>
<keyword id="KW-0067">ATP-binding</keyword>
<keyword id="KW-0342">GTP-binding</keyword>
<keyword id="KW-0547">Nucleotide-binding</keyword>
<dbReference type="EMBL" id="AM421808">
    <property type="protein sequence ID" value="CAM09982.1"/>
    <property type="molecule type" value="Genomic_DNA"/>
</dbReference>
<dbReference type="RefSeq" id="WP_011798824.1">
    <property type="nucleotide sequence ID" value="NC_008767.1"/>
</dbReference>
<dbReference type="SMR" id="A1KT00"/>
<dbReference type="KEGG" id="nmc:NMC0691"/>
<dbReference type="HOGENOM" id="CLU_059558_1_1_4"/>
<dbReference type="Proteomes" id="UP000002286">
    <property type="component" value="Chromosome"/>
</dbReference>
<dbReference type="GO" id="GO:0005524">
    <property type="term" value="F:ATP binding"/>
    <property type="evidence" value="ECO:0007669"/>
    <property type="project" value="UniProtKB-UniRule"/>
</dbReference>
<dbReference type="GO" id="GO:0005525">
    <property type="term" value="F:GTP binding"/>
    <property type="evidence" value="ECO:0007669"/>
    <property type="project" value="UniProtKB-UniRule"/>
</dbReference>
<dbReference type="Gene3D" id="3.40.50.300">
    <property type="entry name" value="P-loop containing nucleotide triphosphate hydrolases"/>
    <property type="match status" value="1"/>
</dbReference>
<dbReference type="HAMAP" id="MF_00636">
    <property type="entry name" value="RapZ_like"/>
    <property type="match status" value="1"/>
</dbReference>
<dbReference type="InterPro" id="IPR027417">
    <property type="entry name" value="P-loop_NTPase"/>
</dbReference>
<dbReference type="InterPro" id="IPR005337">
    <property type="entry name" value="RapZ-like"/>
</dbReference>
<dbReference type="InterPro" id="IPR053930">
    <property type="entry name" value="RapZ-like_N"/>
</dbReference>
<dbReference type="InterPro" id="IPR053931">
    <property type="entry name" value="RapZ_C"/>
</dbReference>
<dbReference type="NCBIfam" id="NF003828">
    <property type="entry name" value="PRK05416.1"/>
    <property type="match status" value="1"/>
</dbReference>
<dbReference type="PANTHER" id="PTHR30448">
    <property type="entry name" value="RNASE ADAPTER PROTEIN RAPZ"/>
    <property type="match status" value="1"/>
</dbReference>
<dbReference type="PANTHER" id="PTHR30448:SF0">
    <property type="entry name" value="RNASE ADAPTER PROTEIN RAPZ"/>
    <property type="match status" value="1"/>
</dbReference>
<dbReference type="Pfam" id="PF22740">
    <property type="entry name" value="PapZ_C"/>
    <property type="match status" value="1"/>
</dbReference>
<dbReference type="Pfam" id="PF03668">
    <property type="entry name" value="RapZ-like_N"/>
    <property type="match status" value="1"/>
</dbReference>
<dbReference type="PIRSF" id="PIRSF005052">
    <property type="entry name" value="P-loopkin"/>
    <property type="match status" value="1"/>
</dbReference>
<dbReference type="SUPFAM" id="SSF52540">
    <property type="entry name" value="P-loop containing nucleoside triphosphate hydrolases"/>
    <property type="match status" value="1"/>
</dbReference>
<feature type="chain" id="PRO_1000056838" description="Nucleotide-binding protein NMC0691">
    <location>
        <begin position="1"/>
        <end position="284"/>
    </location>
</feature>
<feature type="binding site" evidence="1">
    <location>
        <begin position="8"/>
        <end position="15"/>
    </location>
    <ligand>
        <name>ATP</name>
        <dbReference type="ChEBI" id="CHEBI:30616"/>
    </ligand>
</feature>
<feature type="binding site" evidence="1">
    <location>
        <begin position="58"/>
        <end position="61"/>
    </location>
    <ligand>
        <name>GTP</name>
        <dbReference type="ChEBI" id="CHEBI:37565"/>
    </ligand>
</feature>
<reference key="1">
    <citation type="journal article" date="2007" name="PLoS Genet.">
        <title>Meningococcal genetic variation mechanisms viewed through comparative analysis of serogroup C strain FAM18.</title>
        <authorList>
            <person name="Bentley S.D."/>
            <person name="Vernikos G.S."/>
            <person name="Snyder L.A.S."/>
            <person name="Churcher C."/>
            <person name="Arrowsmith C."/>
            <person name="Chillingworth T."/>
            <person name="Cronin A."/>
            <person name="Davis P.H."/>
            <person name="Holroyd N.E."/>
            <person name="Jagels K."/>
            <person name="Maddison M."/>
            <person name="Moule S."/>
            <person name="Rabbinowitsch E."/>
            <person name="Sharp S."/>
            <person name="Unwin L."/>
            <person name="Whitehead S."/>
            <person name="Quail M.A."/>
            <person name="Achtman M."/>
            <person name="Barrell B.G."/>
            <person name="Saunders N.J."/>
            <person name="Parkhill J."/>
        </authorList>
    </citation>
    <scope>NUCLEOTIDE SEQUENCE [LARGE SCALE GENOMIC DNA]</scope>
    <source>
        <strain>ATCC 700532 / DSM 15464 / FAM18</strain>
    </source>
</reference>
<evidence type="ECO:0000255" key="1">
    <source>
        <dbReference type="HAMAP-Rule" id="MF_00636"/>
    </source>
</evidence>
<accession>A1KT00</accession>
<name>Y691_NEIMF</name>
<sequence length="284" mass="32762">MKIVLISGLSGSGKSVALRQMEDSGYFCVDNLPLEMLPALVSYHIERADETELAVSVDVRSGIDIGQAREQIASLRGLGHRVEVLFVEAEEAVLVRRFSETRRGHPLSNQDMTLLESLKKEREWLFPLKEIAYCIDTSKMNAQQLRHAVRQWLKVERTGLLVILEFFGFKYGVPNNADFMFDMRSLPNPYYDPELRPYTGMDKPVWDYLDGQPLVQEMVDDIERFVTHWLPRLEDESRSYVTVAIGCTGGQHRSVYVVEKLARRLKGRYELLIRHRQAQNLSDR</sequence>
<organism>
    <name type="scientific">Neisseria meningitidis serogroup C / serotype 2a (strain ATCC 700532 / DSM 15464 / FAM18)</name>
    <dbReference type="NCBI Taxonomy" id="272831"/>
    <lineage>
        <taxon>Bacteria</taxon>
        <taxon>Pseudomonadati</taxon>
        <taxon>Pseudomonadota</taxon>
        <taxon>Betaproteobacteria</taxon>
        <taxon>Neisseriales</taxon>
        <taxon>Neisseriaceae</taxon>
        <taxon>Neisseria</taxon>
    </lineage>
</organism>
<protein>
    <recommendedName>
        <fullName evidence="1">Nucleotide-binding protein NMC0691</fullName>
    </recommendedName>
</protein>
<proteinExistence type="inferred from homology"/>
<gene>
    <name type="ordered locus">NMC0691</name>
</gene>